<organism>
    <name type="scientific">Haemophilus influenzae (strain ATCC 51907 / DSM 11121 / KW20 / Rd)</name>
    <dbReference type="NCBI Taxonomy" id="71421"/>
    <lineage>
        <taxon>Bacteria</taxon>
        <taxon>Pseudomonadati</taxon>
        <taxon>Pseudomonadota</taxon>
        <taxon>Gammaproteobacteria</taxon>
        <taxon>Pasteurellales</taxon>
        <taxon>Pasteurellaceae</taxon>
        <taxon>Haemophilus</taxon>
    </lineage>
</organism>
<reference key="1">
    <citation type="journal article" date="1995" name="Science">
        <title>Whole-genome random sequencing and assembly of Haemophilus influenzae Rd.</title>
        <authorList>
            <person name="Fleischmann R.D."/>
            <person name="Adams M.D."/>
            <person name="White O."/>
            <person name="Clayton R.A."/>
            <person name="Kirkness E.F."/>
            <person name="Kerlavage A.R."/>
            <person name="Bult C.J."/>
            <person name="Tomb J.-F."/>
            <person name="Dougherty B.A."/>
            <person name="Merrick J.M."/>
            <person name="McKenney K."/>
            <person name="Sutton G.G."/>
            <person name="FitzHugh W."/>
            <person name="Fields C.A."/>
            <person name="Gocayne J.D."/>
            <person name="Scott J.D."/>
            <person name="Shirley R."/>
            <person name="Liu L.-I."/>
            <person name="Glodek A."/>
            <person name="Kelley J.M."/>
            <person name="Weidman J.F."/>
            <person name="Phillips C.A."/>
            <person name="Spriggs T."/>
            <person name="Hedblom E."/>
            <person name="Cotton M.D."/>
            <person name="Utterback T.R."/>
            <person name="Hanna M.C."/>
            <person name="Nguyen D.T."/>
            <person name="Saudek D.M."/>
            <person name="Brandon R.C."/>
            <person name="Fine L.D."/>
            <person name="Fritchman J.L."/>
            <person name="Fuhrmann J.L."/>
            <person name="Geoghagen N.S.M."/>
            <person name="Gnehm C.L."/>
            <person name="McDonald L.A."/>
            <person name="Small K.V."/>
            <person name="Fraser C.M."/>
            <person name="Smith H.O."/>
            <person name="Venter J.C."/>
        </authorList>
    </citation>
    <scope>NUCLEOTIDE SEQUENCE [LARGE SCALE GENOMIC DNA]</scope>
    <source>
        <strain>ATCC 51907 / DSM 11121 / KW20 / Rd</strain>
    </source>
</reference>
<reference key="2">
    <citation type="submission" date="1995-09" db="UniProtKB">
        <authorList>
            <person name="Koonin E.V."/>
            <person name="Rudd K.E."/>
        </authorList>
    </citation>
    <scope>IDENTIFICATION</scope>
</reference>
<proteinExistence type="predicted"/>
<accession>P46455</accession>
<keyword id="KW-1003">Cell membrane</keyword>
<keyword id="KW-0472">Membrane</keyword>
<keyword id="KW-1185">Reference proteome</keyword>
<keyword id="KW-0812">Transmembrane</keyword>
<keyword id="KW-1133">Transmembrane helix</keyword>
<evidence type="ECO:0000255" key="1"/>
<evidence type="ECO:0000305" key="2"/>
<feature type="chain" id="PRO_0000169498" description="Uncharacterized protein HI_0974.1">
    <location>
        <begin position="1"/>
        <end position="85"/>
    </location>
</feature>
<feature type="transmembrane region" description="Helical" evidence="1">
    <location>
        <begin position="16"/>
        <end position="34"/>
    </location>
</feature>
<feature type="transmembrane region" description="Helical" evidence="1">
    <location>
        <begin position="50"/>
        <end position="71"/>
    </location>
</feature>
<protein>
    <recommendedName>
        <fullName>Uncharacterized protein HI_0974.1</fullName>
    </recommendedName>
</protein>
<gene>
    <name type="ordered locus">HI_0974.1</name>
</gene>
<name>Y974A_HAEIN</name>
<dbReference type="EMBL" id="L42023">
    <property type="protein sequence ID" value="AAC22633.1"/>
    <property type="molecule type" value="Genomic_DNA"/>
</dbReference>
<dbReference type="RefSeq" id="NP_439136.1">
    <property type="nucleotide sequence ID" value="NC_000907.1"/>
</dbReference>
<dbReference type="SMR" id="P46455"/>
<dbReference type="STRING" id="71421.HI_0974.1"/>
<dbReference type="EnsemblBacteria" id="AAC22633">
    <property type="protein sequence ID" value="AAC22633"/>
    <property type="gene ID" value="HI_0974.1"/>
</dbReference>
<dbReference type="KEGG" id="hin:HI_0974.1"/>
<dbReference type="PATRIC" id="fig|71421.8.peg.1016"/>
<dbReference type="eggNOG" id="COG3924">
    <property type="taxonomic scope" value="Bacteria"/>
</dbReference>
<dbReference type="HOGENOM" id="CLU_166678_1_1_6"/>
<dbReference type="OrthoDB" id="7062456at2"/>
<dbReference type="PhylomeDB" id="P46455"/>
<dbReference type="BioCyc" id="HINF71421:G1GJ1-1016-MONOMER"/>
<dbReference type="Proteomes" id="UP000000579">
    <property type="component" value="Chromosome"/>
</dbReference>
<dbReference type="GO" id="GO:0005886">
    <property type="term" value="C:plasma membrane"/>
    <property type="evidence" value="ECO:0007669"/>
    <property type="project" value="UniProtKB-SubCell"/>
</dbReference>
<dbReference type="InterPro" id="IPR010398">
    <property type="entry name" value="DUF997"/>
</dbReference>
<dbReference type="PANTHER" id="PTHR39174:SF1">
    <property type="entry name" value="INNER MEMBRANE PROTEIN"/>
    <property type="match status" value="1"/>
</dbReference>
<dbReference type="PANTHER" id="PTHR39174">
    <property type="entry name" value="INNER MEMBRANE PROTEIN-RELATED"/>
    <property type="match status" value="1"/>
</dbReference>
<dbReference type="Pfam" id="PF06196">
    <property type="entry name" value="DUF997"/>
    <property type="match status" value="1"/>
</dbReference>
<comment type="subcellular location">
    <subcellularLocation>
        <location evidence="2">Cell membrane</location>
        <topology evidence="2">Multi-pass membrane protein</topology>
    </subcellularLocation>
</comment>
<comment type="similarity">
    <text evidence="2">To E.coli YhdT.</text>
</comment>
<sequence>MTLKQRYQQAGKEASWALSLSILYVIGWCLCAYLPKETQGPIGFPLWFELSCIYLPILFIVIGHWIIKIIFQDISLEINDQGNQK</sequence>